<protein>
    <recommendedName>
        <fullName evidence="1">Histidine--tRNA ligase</fullName>
        <ecNumber evidence="1">6.1.1.21</ecNumber>
    </recommendedName>
    <alternativeName>
        <fullName evidence="1">Histidyl-tRNA synthetase</fullName>
        <shortName evidence="1">HisRS</shortName>
    </alternativeName>
</protein>
<accession>Q3SL69</accession>
<feature type="chain" id="PRO_1000016480" description="Histidine--tRNA ligase">
    <location>
        <begin position="1"/>
        <end position="419"/>
    </location>
</feature>
<proteinExistence type="inferred from homology"/>
<dbReference type="EC" id="6.1.1.21" evidence="1"/>
<dbReference type="EMBL" id="CP000116">
    <property type="protein sequence ID" value="AAZ96548.1"/>
    <property type="molecule type" value="Genomic_DNA"/>
</dbReference>
<dbReference type="RefSeq" id="WP_011311107.1">
    <property type="nucleotide sequence ID" value="NC_007404.1"/>
</dbReference>
<dbReference type="SMR" id="Q3SL69"/>
<dbReference type="STRING" id="292415.Tbd_0595"/>
<dbReference type="KEGG" id="tbd:Tbd_0595"/>
<dbReference type="eggNOG" id="COG0124">
    <property type="taxonomic scope" value="Bacteria"/>
</dbReference>
<dbReference type="HOGENOM" id="CLU_025113_1_0_4"/>
<dbReference type="OrthoDB" id="9800814at2"/>
<dbReference type="Proteomes" id="UP000008291">
    <property type="component" value="Chromosome"/>
</dbReference>
<dbReference type="GO" id="GO:0005737">
    <property type="term" value="C:cytoplasm"/>
    <property type="evidence" value="ECO:0007669"/>
    <property type="project" value="UniProtKB-SubCell"/>
</dbReference>
<dbReference type="GO" id="GO:0005524">
    <property type="term" value="F:ATP binding"/>
    <property type="evidence" value="ECO:0007669"/>
    <property type="project" value="UniProtKB-UniRule"/>
</dbReference>
<dbReference type="GO" id="GO:0004821">
    <property type="term" value="F:histidine-tRNA ligase activity"/>
    <property type="evidence" value="ECO:0007669"/>
    <property type="project" value="UniProtKB-UniRule"/>
</dbReference>
<dbReference type="GO" id="GO:0006427">
    <property type="term" value="P:histidyl-tRNA aminoacylation"/>
    <property type="evidence" value="ECO:0007669"/>
    <property type="project" value="UniProtKB-UniRule"/>
</dbReference>
<dbReference type="CDD" id="cd00773">
    <property type="entry name" value="HisRS-like_core"/>
    <property type="match status" value="1"/>
</dbReference>
<dbReference type="CDD" id="cd00859">
    <property type="entry name" value="HisRS_anticodon"/>
    <property type="match status" value="1"/>
</dbReference>
<dbReference type="FunFam" id="3.30.930.10:FF:000005">
    <property type="entry name" value="Histidine--tRNA ligase"/>
    <property type="match status" value="1"/>
</dbReference>
<dbReference type="Gene3D" id="3.40.50.800">
    <property type="entry name" value="Anticodon-binding domain"/>
    <property type="match status" value="1"/>
</dbReference>
<dbReference type="Gene3D" id="3.30.930.10">
    <property type="entry name" value="Bira Bifunctional Protein, Domain 2"/>
    <property type="match status" value="1"/>
</dbReference>
<dbReference type="HAMAP" id="MF_00127">
    <property type="entry name" value="His_tRNA_synth"/>
    <property type="match status" value="1"/>
</dbReference>
<dbReference type="InterPro" id="IPR006195">
    <property type="entry name" value="aa-tRNA-synth_II"/>
</dbReference>
<dbReference type="InterPro" id="IPR045864">
    <property type="entry name" value="aa-tRNA-synth_II/BPL/LPL"/>
</dbReference>
<dbReference type="InterPro" id="IPR004154">
    <property type="entry name" value="Anticodon-bd"/>
</dbReference>
<dbReference type="InterPro" id="IPR036621">
    <property type="entry name" value="Anticodon-bd_dom_sf"/>
</dbReference>
<dbReference type="InterPro" id="IPR015807">
    <property type="entry name" value="His-tRNA-ligase"/>
</dbReference>
<dbReference type="InterPro" id="IPR041715">
    <property type="entry name" value="HisRS-like_core"/>
</dbReference>
<dbReference type="InterPro" id="IPR004516">
    <property type="entry name" value="HisRS/HisZ"/>
</dbReference>
<dbReference type="InterPro" id="IPR033656">
    <property type="entry name" value="HisRS_anticodon"/>
</dbReference>
<dbReference type="NCBIfam" id="TIGR00442">
    <property type="entry name" value="hisS"/>
    <property type="match status" value="1"/>
</dbReference>
<dbReference type="PANTHER" id="PTHR43707:SF1">
    <property type="entry name" value="HISTIDINE--TRNA LIGASE, MITOCHONDRIAL-RELATED"/>
    <property type="match status" value="1"/>
</dbReference>
<dbReference type="PANTHER" id="PTHR43707">
    <property type="entry name" value="HISTIDYL-TRNA SYNTHETASE"/>
    <property type="match status" value="1"/>
</dbReference>
<dbReference type="Pfam" id="PF03129">
    <property type="entry name" value="HGTP_anticodon"/>
    <property type="match status" value="1"/>
</dbReference>
<dbReference type="Pfam" id="PF13393">
    <property type="entry name" value="tRNA-synt_His"/>
    <property type="match status" value="1"/>
</dbReference>
<dbReference type="PIRSF" id="PIRSF001549">
    <property type="entry name" value="His-tRNA_synth"/>
    <property type="match status" value="1"/>
</dbReference>
<dbReference type="SUPFAM" id="SSF52954">
    <property type="entry name" value="Class II aaRS ABD-related"/>
    <property type="match status" value="1"/>
</dbReference>
<dbReference type="SUPFAM" id="SSF55681">
    <property type="entry name" value="Class II aaRS and biotin synthetases"/>
    <property type="match status" value="1"/>
</dbReference>
<dbReference type="PROSITE" id="PS50862">
    <property type="entry name" value="AA_TRNA_LIGASE_II"/>
    <property type="match status" value="1"/>
</dbReference>
<name>SYH_THIDA</name>
<organism>
    <name type="scientific">Thiobacillus denitrificans (strain ATCC 25259 / T1)</name>
    <dbReference type="NCBI Taxonomy" id="292415"/>
    <lineage>
        <taxon>Bacteria</taxon>
        <taxon>Pseudomonadati</taxon>
        <taxon>Pseudomonadota</taxon>
        <taxon>Betaproteobacteria</taxon>
        <taxon>Nitrosomonadales</taxon>
        <taxon>Thiobacillaceae</taxon>
        <taxon>Thiobacillus</taxon>
    </lineage>
</organism>
<evidence type="ECO:0000255" key="1">
    <source>
        <dbReference type="HAMAP-Rule" id="MF_00127"/>
    </source>
</evidence>
<comment type="catalytic activity">
    <reaction evidence="1">
        <text>tRNA(His) + L-histidine + ATP = L-histidyl-tRNA(His) + AMP + diphosphate + H(+)</text>
        <dbReference type="Rhea" id="RHEA:17313"/>
        <dbReference type="Rhea" id="RHEA-COMP:9665"/>
        <dbReference type="Rhea" id="RHEA-COMP:9689"/>
        <dbReference type="ChEBI" id="CHEBI:15378"/>
        <dbReference type="ChEBI" id="CHEBI:30616"/>
        <dbReference type="ChEBI" id="CHEBI:33019"/>
        <dbReference type="ChEBI" id="CHEBI:57595"/>
        <dbReference type="ChEBI" id="CHEBI:78442"/>
        <dbReference type="ChEBI" id="CHEBI:78527"/>
        <dbReference type="ChEBI" id="CHEBI:456215"/>
        <dbReference type="EC" id="6.1.1.21"/>
    </reaction>
</comment>
<comment type="subunit">
    <text evidence="1">Homodimer.</text>
</comment>
<comment type="subcellular location">
    <subcellularLocation>
        <location evidence="1">Cytoplasm</location>
    </subcellularLocation>
</comment>
<comment type="similarity">
    <text evidence="1">Belongs to the class-II aminoacyl-tRNA synthetase family.</text>
</comment>
<keyword id="KW-0030">Aminoacyl-tRNA synthetase</keyword>
<keyword id="KW-0067">ATP-binding</keyword>
<keyword id="KW-0963">Cytoplasm</keyword>
<keyword id="KW-0436">Ligase</keyword>
<keyword id="KW-0547">Nucleotide-binding</keyword>
<keyword id="KW-0648">Protein biosynthesis</keyword>
<keyword id="KW-1185">Reference proteome</keyword>
<sequence length="419" mass="46233">MSENIQSVRGMNDCLPDAADAWQGFEAIVRDWLRRYGYREMRTPILEHTGLFKRAIGEVTDIVEKEMYTFVDELNGESLTLRPEGTASSVRAVIQHNLLYDGGKRLWYSGPMFRHERPQKGRYRQFHQVGVEALGFAGPDVDAELIVMCADLWRELGIAPTLQLNTLGDHGARQRHRSKLIAYYEAHRDVLDADAQRRLHSNPLRILDSKNPAMQALNAEAPRLLDELEDEALNHFDALQGLLRANGIAFEINPRLVRGLDYYNRTVFEWVTDQLGAQGTVCAGGRYDGLVEQLGGKPAPAAGFAMGIERLLALVETSGKPIVPAVPDAYIVHAGDTADAFAWQAAATLRGAGLAVVLHCGGGSFKSQMKKADASRARYAVIIGDEEAAAQQVSVKPLRGTAEQTRVELALAIEYLKKA</sequence>
<gene>
    <name evidence="1" type="primary">hisS</name>
    <name type="ordered locus">Tbd_0595</name>
</gene>
<reference key="1">
    <citation type="journal article" date="2006" name="J. Bacteriol.">
        <title>The genome sequence of the obligately chemolithoautotrophic, facultatively anaerobic bacterium Thiobacillus denitrificans.</title>
        <authorList>
            <person name="Beller H.R."/>
            <person name="Chain P.S."/>
            <person name="Letain T.E."/>
            <person name="Chakicherla A."/>
            <person name="Larimer F.W."/>
            <person name="Richardson P.M."/>
            <person name="Coleman M.A."/>
            <person name="Wood A.P."/>
            <person name="Kelly D.P."/>
        </authorList>
    </citation>
    <scope>NUCLEOTIDE SEQUENCE [LARGE SCALE GENOMIC DNA]</scope>
    <source>
        <strain>ATCC 25259 / T1</strain>
    </source>
</reference>